<protein>
    <recommendedName>
        <fullName>Mitochondrial import inner membrane translocase subunit TIM8</fullName>
    </recommendedName>
</protein>
<name>TIM8_CRYNJ</name>
<proteinExistence type="inferred from homology"/>
<reference key="1">
    <citation type="journal article" date="2005" name="Science">
        <title>The genome of the basidiomycetous yeast and human pathogen Cryptococcus neoformans.</title>
        <authorList>
            <person name="Loftus B.J."/>
            <person name="Fung E."/>
            <person name="Roncaglia P."/>
            <person name="Rowley D."/>
            <person name="Amedeo P."/>
            <person name="Bruno D."/>
            <person name="Vamathevan J."/>
            <person name="Miranda M."/>
            <person name="Anderson I.J."/>
            <person name="Fraser J.A."/>
            <person name="Allen J.E."/>
            <person name="Bosdet I.E."/>
            <person name="Brent M.R."/>
            <person name="Chiu R."/>
            <person name="Doering T.L."/>
            <person name="Donlin M.J."/>
            <person name="D'Souza C.A."/>
            <person name="Fox D.S."/>
            <person name="Grinberg V."/>
            <person name="Fu J."/>
            <person name="Fukushima M."/>
            <person name="Haas B.J."/>
            <person name="Huang J.C."/>
            <person name="Janbon G."/>
            <person name="Jones S.J.M."/>
            <person name="Koo H.L."/>
            <person name="Krzywinski M.I."/>
            <person name="Kwon-Chung K.J."/>
            <person name="Lengeler K.B."/>
            <person name="Maiti R."/>
            <person name="Marra M.A."/>
            <person name="Marra R.E."/>
            <person name="Mathewson C.A."/>
            <person name="Mitchell T.G."/>
            <person name="Pertea M."/>
            <person name="Riggs F.R."/>
            <person name="Salzberg S.L."/>
            <person name="Schein J.E."/>
            <person name="Shvartsbeyn A."/>
            <person name="Shin H."/>
            <person name="Shumway M."/>
            <person name="Specht C.A."/>
            <person name="Suh B.B."/>
            <person name="Tenney A."/>
            <person name="Utterback T.R."/>
            <person name="Wickes B.L."/>
            <person name="Wortman J.R."/>
            <person name="Wye N.H."/>
            <person name="Kronstad J.W."/>
            <person name="Lodge J.K."/>
            <person name="Heitman J."/>
            <person name="Davis R.W."/>
            <person name="Fraser C.M."/>
            <person name="Hyman R.W."/>
        </authorList>
    </citation>
    <scope>NUCLEOTIDE SEQUENCE [LARGE SCALE GENOMIC DNA]</scope>
    <source>
        <strain>JEC21 / ATCC MYA-565</strain>
    </source>
</reference>
<feature type="chain" id="PRO_0000228031" description="Mitochondrial import inner membrane translocase subunit TIM8">
    <location>
        <begin position="1"/>
        <end position="88"/>
    </location>
</feature>
<feature type="short sequence motif" description="Twin CX3C motif">
    <location>
        <begin position="42"/>
        <end position="66"/>
    </location>
</feature>
<feature type="disulfide bond" evidence="1">
    <location>
        <begin position="42"/>
        <end position="66"/>
    </location>
</feature>
<feature type="disulfide bond" evidence="1">
    <location>
        <begin position="46"/>
        <end position="62"/>
    </location>
</feature>
<sequence>MSAPTSIPALDEASKKELESFLEQEQAKAKLQASIHELTNTCWNTCITGGISSKFSKSEAQCLENCVDRFLDSSLYIVRQIEAQKQQI</sequence>
<organism>
    <name type="scientific">Cryptococcus neoformans var. neoformans serotype D (strain JEC21 / ATCC MYA-565)</name>
    <name type="common">Filobasidiella neoformans</name>
    <dbReference type="NCBI Taxonomy" id="214684"/>
    <lineage>
        <taxon>Eukaryota</taxon>
        <taxon>Fungi</taxon>
        <taxon>Dikarya</taxon>
        <taxon>Basidiomycota</taxon>
        <taxon>Agaricomycotina</taxon>
        <taxon>Tremellomycetes</taxon>
        <taxon>Tremellales</taxon>
        <taxon>Cryptococcaceae</taxon>
        <taxon>Cryptococcus</taxon>
        <taxon>Cryptococcus neoformans species complex</taxon>
    </lineage>
</organism>
<keyword id="KW-0143">Chaperone</keyword>
<keyword id="KW-1015">Disulfide bond</keyword>
<keyword id="KW-0472">Membrane</keyword>
<keyword id="KW-0479">Metal-binding</keyword>
<keyword id="KW-0496">Mitochondrion</keyword>
<keyword id="KW-0999">Mitochondrion inner membrane</keyword>
<keyword id="KW-0653">Protein transport</keyword>
<keyword id="KW-1185">Reference proteome</keyword>
<keyword id="KW-0811">Translocation</keyword>
<keyword id="KW-0813">Transport</keyword>
<keyword id="KW-0862">Zinc</keyword>
<gene>
    <name type="primary">TIM8</name>
    <name type="ordered locus">CNF01290</name>
</gene>
<accession>P0CR94</accession>
<accession>Q55QJ6</accession>
<accession>Q5KFM0</accession>
<evidence type="ECO:0000250" key="1"/>
<evidence type="ECO:0000305" key="2"/>
<dbReference type="EMBL" id="AE017346">
    <property type="protein sequence ID" value="AAW43967.2"/>
    <property type="molecule type" value="Genomic_DNA"/>
</dbReference>
<dbReference type="RefSeq" id="XP_571274.1">
    <property type="nucleotide sequence ID" value="XM_571274.1"/>
</dbReference>
<dbReference type="SMR" id="P0CR94"/>
<dbReference type="FunCoup" id="P0CR94">
    <property type="interactions" value="135"/>
</dbReference>
<dbReference type="STRING" id="214684.P0CR94"/>
<dbReference type="PaxDb" id="214684-P0CR94"/>
<dbReference type="EnsemblFungi" id="AAW43967">
    <property type="protein sequence ID" value="AAW43967"/>
    <property type="gene ID" value="CNF01290"/>
</dbReference>
<dbReference type="GeneID" id="3258298"/>
<dbReference type="KEGG" id="cne:CNF01290"/>
<dbReference type="VEuPathDB" id="FungiDB:CNF01290"/>
<dbReference type="eggNOG" id="KOG3489">
    <property type="taxonomic scope" value="Eukaryota"/>
</dbReference>
<dbReference type="InParanoid" id="P0CR94"/>
<dbReference type="OrthoDB" id="344165at2759"/>
<dbReference type="Proteomes" id="UP000002149">
    <property type="component" value="Chromosome 6"/>
</dbReference>
<dbReference type="GO" id="GO:0005743">
    <property type="term" value="C:mitochondrial inner membrane"/>
    <property type="evidence" value="ECO:0007669"/>
    <property type="project" value="UniProtKB-SubCell"/>
</dbReference>
<dbReference type="GO" id="GO:0046872">
    <property type="term" value="F:metal ion binding"/>
    <property type="evidence" value="ECO:0007669"/>
    <property type="project" value="UniProtKB-KW"/>
</dbReference>
<dbReference type="GO" id="GO:0015031">
    <property type="term" value="P:protein transport"/>
    <property type="evidence" value="ECO:0007669"/>
    <property type="project" value="UniProtKB-KW"/>
</dbReference>
<dbReference type="Gene3D" id="1.10.287.810">
    <property type="entry name" value="Mitochondrial import inner membrane translocase subunit tim13 like domains"/>
    <property type="match status" value="1"/>
</dbReference>
<dbReference type="InterPro" id="IPR004217">
    <property type="entry name" value="Tim10-like"/>
</dbReference>
<dbReference type="InterPro" id="IPR035427">
    <property type="entry name" value="Tim10-like_dom_sf"/>
</dbReference>
<dbReference type="Pfam" id="PF02953">
    <property type="entry name" value="zf-Tim10_DDP"/>
    <property type="match status" value="1"/>
</dbReference>
<dbReference type="SUPFAM" id="SSF144122">
    <property type="entry name" value="Tim10-like"/>
    <property type="match status" value="1"/>
</dbReference>
<comment type="function">
    <text evidence="1">Mitochondrial intermembrane chaperone that participates in the import and insertion of some multi-pass transmembrane proteins into the mitochondrial inner membrane. Also required for the transfer of beta-barrel precursors from the TOM complex to the sorting and assembly machinery (SAM complex) of the outer membrane. Acts as a chaperone-like protein that protects the hydrophobic precursors from aggregation and guide them through the mitochondrial intermembrane space. The TIM8-TIM13 complex is non essential and only mediates the import of few proteins, while the predominant TIM9-TIM10 70 kDa complex is crucial and mediates the import of much more proteins (By similarity).</text>
</comment>
<comment type="subunit">
    <text evidence="1">Heterohexamer; composed of 3 copies of TIM8 and 3 copies of TIM13, named soluble 70 kDa complex. Associates with the TIM22 complex, whose core is composed of TIM22 and TIM54. Interacts with the transmembrane regions of multi-pass transmembrane proteins in transit (By similarity).</text>
</comment>
<comment type="subcellular location">
    <subcellularLocation>
        <location evidence="1">Mitochondrion inner membrane</location>
        <topology evidence="1">Peripheral membrane protein</topology>
        <orientation evidence="1">Intermembrane side</orientation>
    </subcellularLocation>
</comment>
<comment type="domain">
    <text evidence="1">The twin CX3C motif contains 4 conserved Cys residues that form 2 disulfide bonds in the mitochondrial intermembrane space. However, during the transit of TIM8 from cytoplasm into mitochondrion, the Cys residues probably coordinate zinc, thereby preventing folding and allowing its transfer across mitochondrial outer membrane (By similarity).</text>
</comment>
<comment type="similarity">
    <text evidence="2">Belongs to the small Tim family.</text>
</comment>